<accession>C3PMD7</accession>
<feature type="chain" id="PRO_1000205609" description="Large ribosomal subunit protein bL28">
    <location>
        <begin position="1"/>
        <end position="97"/>
    </location>
</feature>
<dbReference type="EMBL" id="CP001612">
    <property type="protein sequence ID" value="ACP53097.1"/>
    <property type="molecule type" value="Genomic_DNA"/>
</dbReference>
<dbReference type="RefSeq" id="WP_004996729.1">
    <property type="nucleotide sequence ID" value="NC_012633.1"/>
</dbReference>
<dbReference type="SMR" id="C3PMD7"/>
<dbReference type="GeneID" id="95361857"/>
<dbReference type="KEGG" id="raf:RAF_ORF0124"/>
<dbReference type="HOGENOM" id="CLU_064548_4_2_5"/>
<dbReference type="Proteomes" id="UP000002305">
    <property type="component" value="Chromosome"/>
</dbReference>
<dbReference type="GO" id="GO:1990904">
    <property type="term" value="C:ribonucleoprotein complex"/>
    <property type="evidence" value="ECO:0007669"/>
    <property type="project" value="UniProtKB-KW"/>
</dbReference>
<dbReference type="GO" id="GO:0005840">
    <property type="term" value="C:ribosome"/>
    <property type="evidence" value="ECO:0007669"/>
    <property type="project" value="UniProtKB-KW"/>
</dbReference>
<dbReference type="GO" id="GO:0003735">
    <property type="term" value="F:structural constituent of ribosome"/>
    <property type="evidence" value="ECO:0007669"/>
    <property type="project" value="InterPro"/>
</dbReference>
<dbReference type="GO" id="GO:0006412">
    <property type="term" value="P:translation"/>
    <property type="evidence" value="ECO:0007669"/>
    <property type="project" value="UniProtKB-UniRule"/>
</dbReference>
<dbReference type="Gene3D" id="2.30.170.40">
    <property type="entry name" value="Ribosomal protein L28/L24"/>
    <property type="match status" value="1"/>
</dbReference>
<dbReference type="HAMAP" id="MF_00373">
    <property type="entry name" value="Ribosomal_bL28"/>
    <property type="match status" value="1"/>
</dbReference>
<dbReference type="InterPro" id="IPR026569">
    <property type="entry name" value="Ribosomal_bL28"/>
</dbReference>
<dbReference type="InterPro" id="IPR034704">
    <property type="entry name" value="Ribosomal_bL28/bL31-like_sf"/>
</dbReference>
<dbReference type="InterPro" id="IPR001383">
    <property type="entry name" value="Ribosomal_bL28_bact-type"/>
</dbReference>
<dbReference type="InterPro" id="IPR037147">
    <property type="entry name" value="Ribosomal_bL28_sf"/>
</dbReference>
<dbReference type="NCBIfam" id="TIGR00009">
    <property type="entry name" value="L28"/>
    <property type="match status" value="1"/>
</dbReference>
<dbReference type="PANTHER" id="PTHR13528">
    <property type="entry name" value="39S RIBOSOMAL PROTEIN L28, MITOCHONDRIAL"/>
    <property type="match status" value="1"/>
</dbReference>
<dbReference type="PANTHER" id="PTHR13528:SF2">
    <property type="entry name" value="LARGE RIBOSOMAL SUBUNIT PROTEIN BL28M"/>
    <property type="match status" value="1"/>
</dbReference>
<dbReference type="Pfam" id="PF00830">
    <property type="entry name" value="Ribosomal_L28"/>
    <property type="match status" value="1"/>
</dbReference>
<dbReference type="SUPFAM" id="SSF143800">
    <property type="entry name" value="L28p-like"/>
    <property type="match status" value="1"/>
</dbReference>
<gene>
    <name evidence="1" type="primary">rpmB</name>
    <name type="ordered locus">RAF_ORF0124</name>
</gene>
<proteinExistence type="inferred from homology"/>
<reference key="1">
    <citation type="journal article" date="2009" name="BMC Genomics">
        <title>Analysis of the Rickettsia africae genome reveals that virulence acquisition in Rickettsia species may be explained by genome reduction.</title>
        <authorList>
            <person name="Fournier P.-E."/>
            <person name="El Karkouri K."/>
            <person name="Leroy Q."/>
            <person name="Robert C."/>
            <person name="Giumelli B."/>
            <person name="Renesto P."/>
            <person name="Socolovschi C."/>
            <person name="Parola P."/>
            <person name="Audic S."/>
            <person name="Raoult D."/>
        </authorList>
    </citation>
    <scope>NUCLEOTIDE SEQUENCE [LARGE SCALE GENOMIC DNA]</scope>
    <source>
        <strain>ESF-5</strain>
    </source>
</reference>
<comment type="similarity">
    <text evidence="1">Belongs to the bacterial ribosomal protein bL28 family.</text>
</comment>
<organism>
    <name type="scientific">Rickettsia africae (strain ESF-5)</name>
    <dbReference type="NCBI Taxonomy" id="347255"/>
    <lineage>
        <taxon>Bacteria</taxon>
        <taxon>Pseudomonadati</taxon>
        <taxon>Pseudomonadota</taxon>
        <taxon>Alphaproteobacteria</taxon>
        <taxon>Rickettsiales</taxon>
        <taxon>Rickettsiaceae</taxon>
        <taxon>Rickettsieae</taxon>
        <taxon>Rickettsia</taxon>
        <taxon>spotted fever group</taxon>
    </lineage>
</organism>
<sequence>MSRKCELTGVGVLYGNNVSHSQRKTRRRFEPNLRSVKFTSDITAGEYRLSVNARCISSVEKAGGFDAYILKADDNVLSSNARAIKKKIIQTKTAKSL</sequence>
<evidence type="ECO:0000255" key="1">
    <source>
        <dbReference type="HAMAP-Rule" id="MF_00373"/>
    </source>
</evidence>
<evidence type="ECO:0000305" key="2"/>
<name>RL28_RICAE</name>
<protein>
    <recommendedName>
        <fullName evidence="1">Large ribosomal subunit protein bL28</fullName>
    </recommendedName>
    <alternativeName>
        <fullName evidence="2">50S ribosomal protein L28</fullName>
    </alternativeName>
</protein>
<keyword id="KW-0687">Ribonucleoprotein</keyword>
<keyword id="KW-0689">Ribosomal protein</keyword>